<sequence>MRVDGREKTELRHIHIHTNYLKHPEGSVLIEVGDTKVICSATIEERVPPFMRGEGKGWVTAEYAMIPRATEQRTIRESSKGKVTGRTMEIQRLIGRALRAVVDLEALGERTVWIDCDVIQADGGTRTASITGAYVAMVLAFEKLLQAEKVSKIPVKDYLAATSVGIVEEQGVVLDLNYAEDSKADVDMNVIMTGKGQFVEVQGTGEEATFSRAQLNELLDAAEQGIFQLIDIQKEALGDIVSHIE</sequence>
<accession>C3PA74</accession>
<evidence type="ECO:0000255" key="1">
    <source>
        <dbReference type="HAMAP-Rule" id="MF_00564"/>
    </source>
</evidence>
<organism>
    <name type="scientific">Bacillus anthracis (strain A0248)</name>
    <dbReference type="NCBI Taxonomy" id="592021"/>
    <lineage>
        <taxon>Bacteria</taxon>
        <taxon>Bacillati</taxon>
        <taxon>Bacillota</taxon>
        <taxon>Bacilli</taxon>
        <taxon>Bacillales</taxon>
        <taxon>Bacillaceae</taxon>
        <taxon>Bacillus</taxon>
        <taxon>Bacillus cereus group</taxon>
    </lineage>
</organism>
<reference key="1">
    <citation type="submission" date="2009-04" db="EMBL/GenBank/DDBJ databases">
        <title>Genome sequence of Bacillus anthracis A0248.</title>
        <authorList>
            <person name="Dodson R.J."/>
            <person name="Munk A.C."/>
            <person name="Bruce D."/>
            <person name="Detter C."/>
            <person name="Tapia R."/>
            <person name="Sutton G."/>
            <person name="Sims D."/>
            <person name="Brettin T."/>
        </authorList>
    </citation>
    <scope>NUCLEOTIDE SEQUENCE [LARGE SCALE GENOMIC DNA]</scope>
    <source>
        <strain>A0248</strain>
    </source>
</reference>
<feature type="chain" id="PRO_1000194464" description="Ribonuclease PH">
    <location>
        <begin position="1"/>
        <end position="245"/>
    </location>
</feature>
<feature type="binding site" evidence="1">
    <location>
        <position position="86"/>
    </location>
    <ligand>
        <name>phosphate</name>
        <dbReference type="ChEBI" id="CHEBI:43474"/>
        <note>substrate</note>
    </ligand>
</feature>
<feature type="binding site" evidence="1">
    <location>
        <begin position="124"/>
        <end position="126"/>
    </location>
    <ligand>
        <name>phosphate</name>
        <dbReference type="ChEBI" id="CHEBI:43474"/>
        <note>substrate</note>
    </ligand>
</feature>
<keyword id="KW-0548">Nucleotidyltransferase</keyword>
<keyword id="KW-0694">RNA-binding</keyword>
<keyword id="KW-0698">rRNA processing</keyword>
<keyword id="KW-0808">Transferase</keyword>
<keyword id="KW-0819">tRNA processing</keyword>
<keyword id="KW-0820">tRNA-binding</keyword>
<dbReference type="EC" id="2.7.7.56" evidence="1"/>
<dbReference type="EMBL" id="CP001598">
    <property type="protein sequence ID" value="ACQ47063.1"/>
    <property type="molecule type" value="Genomic_DNA"/>
</dbReference>
<dbReference type="RefSeq" id="WP_001261764.1">
    <property type="nucleotide sequence ID" value="NC_012659.1"/>
</dbReference>
<dbReference type="SMR" id="C3PA74"/>
<dbReference type="GeneID" id="45024354"/>
<dbReference type="KEGG" id="bai:BAA_4732"/>
<dbReference type="HOGENOM" id="CLU_050858_0_0_9"/>
<dbReference type="GO" id="GO:0000175">
    <property type="term" value="F:3'-5'-RNA exonuclease activity"/>
    <property type="evidence" value="ECO:0007669"/>
    <property type="project" value="UniProtKB-UniRule"/>
</dbReference>
<dbReference type="GO" id="GO:0000049">
    <property type="term" value="F:tRNA binding"/>
    <property type="evidence" value="ECO:0007669"/>
    <property type="project" value="UniProtKB-UniRule"/>
</dbReference>
<dbReference type="GO" id="GO:0009022">
    <property type="term" value="F:tRNA nucleotidyltransferase activity"/>
    <property type="evidence" value="ECO:0007669"/>
    <property type="project" value="UniProtKB-UniRule"/>
</dbReference>
<dbReference type="GO" id="GO:0016075">
    <property type="term" value="P:rRNA catabolic process"/>
    <property type="evidence" value="ECO:0007669"/>
    <property type="project" value="UniProtKB-UniRule"/>
</dbReference>
<dbReference type="GO" id="GO:0006364">
    <property type="term" value="P:rRNA processing"/>
    <property type="evidence" value="ECO:0007669"/>
    <property type="project" value="UniProtKB-KW"/>
</dbReference>
<dbReference type="GO" id="GO:0008033">
    <property type="term" value="P:tRNA processing"/>
    <property type="evidence" value="ECO:0007669"/>
    <property type="project" value="UniProtKB-UniRule"/>
</dbReference>
<dbReference type="CDD" id="cd11362">
    <property type="entry name" value="RNase_PH_bact"/>
    <property type="match status" value="1"/>
</dbReference>
<dbReference type="FunFam" id="3.30.230.70:FF:000003">
    <property type="entry name" value="Ribonuclease PH"/>
    <property type="match status" value="1"/>
</dbReference>
<dbReference type="Gene3D" id="3.30.230.70">
    <property type="entry name" value="GHMP Kinase, N-terminal domain"/>
    <property type="match status" value="1"/>
</dbReference>
<dbReference type="HAMAP" id="MF_00564">
    <property type="entry name" value="RNase_PH"/>
    <property type="match status" value="1"/>
</dbReference>
<dbReference type="InterPro" id="IPR001247">
    <property type="entry name" value="ExoRNase_PH_dom1"/>
</dbReference>
<dbReference type="InterPro" id="IPR015847">
    <property type="entry name" value="ExoRNase_PH_dom2"/>
</dbReference>
<dbReference type="InterPro" id="IPR036345">
    <property type="entry name" value="ExoRNase_PH_dom2_sf"/>
</dbReference>
<dbReference type="InterPro" id="IPR027408">
    <property type="entry name" value="PNPase/RNase_PH_dom_sf"/>
</dbReference>
<dbReference type="InterPro" id="IPR020568">
    <property type="entry name" value="Ribosomal_Su5_D2-typ_SF"/>
</dbReference>
<dbReference type="InterPro" id="IPR050080">
    <property type="entry name" value="RNase_PH"/>
</dbReference>
<dbReference type="InterPro" id="IPR002381">
    <property type="entry name" value="RNase_PH_bac-type"/>
</dbReference>
<dbReference type="InterPro" id="IPR018336">
    <property type="entry name" value="RNase_PH_CS"/>
</dbReference>
<dbReference type="NCBIfam" id="TIGR01966">
    <property type="entry name" value="RNasePH"/>
    <property type="match status" value="1"/>
</dbReference>
<dbReference type="PANTHER" id="PTHR11953">
    <property type="entry name" value="EXOSOME COMPLEX COMPONENT"/>
    <property type="match status" value="1"/>
</dbReference>
<dbReference type="PANTHER" id="PTHR11953:SF0">
    <property type="entry name" value="EXOSOME COMPLEX COMPONENT RRP41"/>
    <property type="match status" value="1"/>
</dbReference>
<dbReference type="Pfam" id="PF01138">
    <property type="entry name" value="RNase_PH"/>
    <property type="match status" value="1"/>
</dbReference>
<dbReference type="Pfam" id="PF03725">
    <property type="entry name" value="RNase_PH_C"/>
    <property type="match status" value="1"/>
</dbReference>
<dbReference type="SUPFAM" id="SSF55666">
    <property type="entry name" value="Ribonuclease PH domain 2-like"/>
    <property type="match status" value="1"/>
</dbReference>
<dbReference type="SUPFAM" id="SSF54211">
    <property type="entry name" value="Ribosomal protein S5 domain 2-like"/>
    <property type="match status" value="1"/>
</dbReference>
<dbReference type="PROSITE" id="PS01277">
    <property type="entry name" value="RIBONUCLEASE_PH"/>
    <property type="match status" value="1"/>
</dbReference>
<proteinExistence type="inferred from homology"/>
<comment type="function">
    <text evidence="1">Phosphorolytic 3'-5' exoribonuclease that plays an important role in tRNA 3'-end maturation. Removes nucleotide residues following the 3'-CCA terminus of tRNAs; can also add nucleotides to the ends of RNA molecules by using nucleoside diphosphates as substrates, but this may not be physiologically important. Probably plays a role in initiation of 16S rRNA degradation (leading to ribosome degradation) during starvation.</text>
</comment>
<comment type="catalytic activity">
    <reaction evidence="1">
        <text>tRNA(n+1) + phosphate = tRNA(n) + a ribonucleoside 5'-diphosphate</text>
        <dbReference type="Rhea" id="RHEA:10628"/>
        <dbReference type="Rhea" id="RHEA-COMP:17343"/>
        <dbReference type="Rhea" id="RHEA-COMP:17344"/>
        <dbReference type="ChEBI" id="CHEBI:43474"/>
        <dbReference type="ChEBI" id="CHEBI:57930"/>
        <dbReference type="ChEBI" id="CHEBI:173114"/>
        <dbReference type="EC" id="2.7.7.56"/>
    </reaction>
</comment>
<comment type="subunit">
    <text evidence="1">Homohexameric ring arranged as a trimer of dimers.</text>
</comment>
<comment type="similarity">
    <text evidence="1">Belongs to the RNase PH family.</text>
</comment>
<protein>
    <recommendedName>
        <fullName evidence="1">Ribonuclease PH</fullName>
        <shortName evidence="1">RNase PH</shortName>
        <ecNumber evidence="1">2.7.7.56</ecNumber>
    </recommendedName>
    <alternativeName>
        <fullName evidence="1">tRNA nucleotidyltransferase</fullName>
    </alternativeName>
</protein>
<name>RNPH_BACAA</name>
<gene>
    <name evidence="1" type="primary">rph</name>
    <name type="ordered locus">BAA_4732</name>
</gene>